<keyword id="KW-0028">Amino-acid biosynthesis</keyword>
<keyword id="KW-0057">Aromatic amino acid biosynthesis</keyword>
<keyword id="KW-0456">Lyase</keyword>
<keyword id="KW-1185">Reference proteome</keyword>
<keyword id="KW-0822">Tryptophan biosynthesis</keyword>
<dbReference type="EC" id="4.2.1.20" evidence="1"/>
<dbReference type="EMBL" id="AE017126">
    <property type="protein sequence ID" value="AAP99619.1"/>
    <property type="molecule type" value="Genomic_DNA"/>
</dbReference>
<dbReference type="RefSeq" id="NP_874967.1">
    <property type="nucleotide sequence ID" value="NC_005042.1"/>
</dbReference>
<dbReference type="RefSeq" id="WP_011124727.1">
    <property type="nucleotide sequence ID" value="NC_005042.1"/>
</dbReference>
<dbReference type="SMR" id="Q7VD15"/>
<dbReference type="STRING" id="167539.Pro_0574"/>
<dbReference type="EnsemblBacteria" id="AAP99619">
    <property type="protein sequence ID" value="AAP99619"/>
    <property type="gene ID" value="Pro_0574"/>
</dbReference>
<dbReference type="KEGG" id="pma:Pro_0574"/>
<dbReference type="PATRIC" id="fig|167539.5.peg.589"/>
<dbReference type="eggNOG" id="COG0159">
    <property type="taxonomic scope" value="Bacteria"/>
</dbReference>
<dbReference type="HOGENOM" id="CLU_016734_0_2_3"/>
<dbReference type="OrthoDB" id="9804578at2"/>
<dbReference type="UniPathway" id="UPA00035">
    <property type="reaction ID" value="UER00044"/>
</dbReference>
<dbReference type="Proteomes" id="UP000001420">
    <property type="component" value="Chromosome"/>
</dbReference>
<dbReference type="GO" id="GO:0005829">
    <property type="term" value="C:cytosol"/>
    <property type="evidence" value="ECO:0007669"/>
    <property type="project" value="TreeGrafter"/>
</dbReference>
<dbReference type="GO" id="GO:0004834">
    <property type="term" value="F:tryptophan synthase activity"/>
    <property type="evidence" value="ECO:0007669"/>
    <property type="project" value="UniProtKB-UniRule"/>
</dbReference>
<dbReference type="CDD" id="cd04724">
    <property type="entry name" value="Tryptophan_synthase_alpha"/>
    <property type="match status" value="1"/>
</dbReference>
<dbReference type="FunFam" id="3.20.20.70:FF:000037">
    <property type="entry name" value="Tryptophan synthase alpha chain"/>
    <property type="match status" value="1"/>
</dbReference>
<dbReference type="Gene3D" id="3.20.20.70">
    <property type="entry name" value="Aldolase class I"/>
    <property type="match status" value="1"/>
</dbReference>
<dbReference type="HAMAP" id="MF_00131">
    <property type="entry name" value="Trp_synth_alpha"/>
    <property type="match status" value="1"/>
</dbReference>
<dbReference type="InterPro" id="IPR013785">
    <property type="entry name" value="Aldolase_TIM"/>
</dbReference>
<dbReference type="InterPro" id="IPR011060">
    <property type="entry name" value="RibuloseP-bd_barrel"/>
</dbReference>
<dbReference type="InterPro" id="IPR018204">
    <property type="entry name" value="Trp_synthase_alpha_AS"/>
</dbReference>
<dbReference type="InterPro" id="IPR002028">
    <property type="entry name" value="Trp_synthase_suA"/>
</dbReference>
<dbReference type="NCBIfam" id="TIGR00262">
    <property type="entry name" value="trpA"/>
    <property type="match status" value="1"/>
</dbReference>
<dbReference type="PANTHER" id="PTHR43406:SF1">
    <property type="entry name" value="TRYPTOPHAN SYNTHASE ALPHA CHAIN, CHLOROPLASTIC"/>
    <property type="match status" value="1"/>
</dbReference>
<dbReference type="PANTHER" id="PTHR43406">
    <property type="entry name" value="TRYPTOPHAN SYNTHASE, ALPHA CHAIN"/>
    <property type="match status" value="1"/>
</dbReference>
<dbReference type="Pfam" id="PF00290">
    <property type="entry name" value="Trp_syntA"/>
    <property type="match status" value="1"/>
</dbReference>
<dbReference type="SUPFAM" id="SSF51366">
    <property type="entry name" value="Ribulose-phoshate binding barrel"/>
    <property type="match status" value="1"/>
</dbReference>
<dbReference type="PROSITE" id="PS00167">
    <property type="entry name" value="TRP_SYNTHASE_ALPHA"/>
    <property type="match status" value="1"/>
</dbReference>
<reference key="1">
    <citation type="journal article" date="2003" name="Proc. Natl. Acad. Sci. U.S.A.">
        <title>Genome sequence of the cyanobacterium Prochlorococcus marinus SS120, a nearly minimal oxyphototrophic genome.</title>
        <authorList>
            <person name="Dufresne A."/>
            <person name="Salanoubat M."/>
            <person name="Partensky F."/>
            <person name="Artiguenave F."/>
            <person name="Axmann I.M."/>
            <person name="Barbe V."/>
            <person name="Duprat S."/>
            <person name="Galperin M.Y."/>
            <person name="Koonin E.V."/>
            <person name="Le Gall F."/>
            <person name="Makarova K.S."/>
            <person name="Ostrowski M."/>
            <person name="Oztas S."/>
            <person name="Robert C."/>
            <person name="Rogozin I.B."/>
            <person name="Scanlan D.J."/>
            <person name="Tandeau de Marsac N."/>
            <person name="Weissenbach J."/>
            <person name="Wincker P."/>
            <person name="Wolf Y.I."/>
            <person name="Hess W.R."/>
        </authorList>
    </citation>
    <scope>NUCLEOTIDE SEQUENCE [LARGE SCALE GENOMIC DNA]</scope>
    <source>
        <strain>SARG / CCMP1375 / SS120</strain>
    </source>
</reference>
<organism>
    <name type="scientific">Prochlorococcus marinus (strain SARG / CCMP1375 / SS120)</name>
    <dbReference type="NCBI Taxonomy" id="167539"/>
    <lineage>
        <taxon>Bacteria</taxon>
        <taxon>Bacillati</taxon>
        <taxon>Cyanobacteriota</taxon>
        <taxon>Cyanophyceae</taxon>
        <taxon>Synechococcales</taxon>
        <taxon>Prochlorococcaceae</taxon>
        <taxon>Prochlorococcus</taxon>
    </lineage>
</organism>
<name>TRPA_PROMA</name>
<gene>
    <name evidence="1" type="primary">trpA</name>
    <name type="ordered locus">Pro_0574</name>
</gene>
<sequence>MESSILERCFSQSKKEGRIALMPFIMAGDPDVNTSAEILIMLEKKGADIIELGIPYSDPLADGPIIQKAASRALNSGTSPKSVLEMLSTLKTKLSVPIILFTYSNPLLNYGMEEFCIDASKAGAAGLVVPDLPLEETEKLSSIALSKNLDLVLLVAPTTPKERMRKISQRSNGFTYLVSVTGVTGERSALENRVQLLINELRGFSSTPVAVGFGISDTKHVIQVKRWGADGAIIGSALVKRISNATTGQEAEEAGKFCSELYKATSL</sequence>
<evidence type="ECO:0000255" key="1">
    <source>
        <dbReference type="HAMAP-Rule" id="MF_00131"/>
    </source>
</evidence>
<accession>Q7VD15</accession>
<proteinExistence type="inferred from homology"/>
<comment type="function">
    <text evidence="1">The alpha subunit is responsible for the aldol cleavage of indoleglycerol phosphate to indole and glyceraldehyde 3-phosphate.</text>
</comment>
<comment type="catalytic activity">
    <reaction evidence="1">
        <text>(1S,2R)-1-C-(indol-3-yl)glycerol 3-phosphate + L-serine = D-glyceraldehyde 3-phosphate + L-tryptophan + H2O</text>
        <dbReference type="Rhea" id="RHEA:10532"/>
        <dbReference type="ChEBI" id="CHEBI:15377"/>
        <dbReference type="ChEBI" id="CHEBI:33384"/>
        <dbReference type="ChEBI" id="CHEBI:57912"/>
        <dbReference type="ChEBI" id="CHEBI:58866"/>
        <dbReference type="ChEBI" id="CHEBI:59776"/>
        <dbReference type="EC" id="4.2.1.20"/>
    </reaction>
</comment>
<comment type="pathway">
    <text evidence="1">Amino-acid biosynthesis; L-tryptophan biosynthesis; L-tryptophan from chorismate: step 5/5.</text>
</comment>
<comment type="subunit">
    <text evidence="1">Tetramer of two alpha and two beta chains.</text>
</comment>
<comment type="similarity">
    <text evidence="1">Belongs to the TrpA family.</text>
</comment>
<feature type="chain" id="PRO_0000098822" description="Tryptophan synthase alpha chain">
    <location>
        <begin position="1"/>
        <end position="267"/>
    </location>
</feature>
<feature type="active site" description="Proton acceptor" evidence="1">
    <location>
        <position position="51"/>
    </location>
</feature>
<feature type="active site" description="Proton acceptor" evidence="1">
    <location>
        <position position="62"/>
    </location>
</feature>
<protein>
    <recommendedName>
        <fullName evidence="1">Tryptophan synthase alpha chain</fullName>
        <ecNumber evidence="1">4.2.1.20</ecNumber>
    </recommendedName>
</protein>